<sequence length="313" mass="34432">MRQDHLITATQLSRDDIEAVLDRAREVADDPAAYADRHAGSVLALCFFEPSTRTRMSFDSAAKRLGMNTIGMGDVDSSSVSKGESLSDTVRVIEGYADALVLRHPSEGAATLAAERVSVPVVNAGDGAGQHPSQTLLDLHTIRENHGLDDLTVGIMGDLKYGRTVHSLAAALTEFDANQHFISPESLRLPRSVRFDLHETGAQVREHTDLEGVLGELDVLYVTRIQKERFPDENEYHRVAGEYQIDAETLEDAPDDLTVMHPLPRVDEIAPDVDETDHATYFEQAHNGIPVRMALLDILLENAEGDEGMEVDR</sequence>
<accession>B9LND9</accession>
<keyword id="KW-0665">Pyrimidine biosynthesis</keyword>
<keyword id="KW-1185">Reference proteome</keyword>
<keyword id="KW-0808">Transferase</keyword>
<protein>
    <recommendedName>
        <fullName evidence="1">Aspartate carbamoyltransferase catalytic subunit</fullName>
        <ecNumber evidence="1">2.1.3.2</ecNumber>
    </recommendedName>
    <alternativeName>
        <fullName evidence="1">Aspartate transcarbamylase</fullName>
        <shortName evidence="1">ATCase</shortName>
    </alternativeName>
</protein>
<dbReference type="EC" id="2.1.3.2" evidence="1"/>
<dbReference type="EMBL" id="CP001365">
    <property type="protein sequence ID" value="ACM56877.1"/>
    <property type="molecule type" value="Genomic_DNA"/>
</dbReference>
<dbReference type="RefSeq" id="WP_015910019.1">
    <property type="nucleotide sequence ID" value="NC_012029.1"/>
</dbReference>
<dbReference type="SMR" id="B9LND9"/>
<dbReference type="GeneID" id="7399380"/>
<dbReference type="KEGG" id="hla:Hlac_1285"/>
<dbReference type="eggNOG" id="arCOG00911">
    <property type="taxonomic scope" value="Archaea"/>
</dbReference>
<dbReference type="HOGENOM" id="CLU_043846_1_2_2"/>
<dbReference type="UniPathway" id="UPA00070">
    <property type="reaction ID" value="UER00116"/>
</dbReference>
<dbReference type="Proteomes" id="UP000000740">
    <property type="component" value="Chromosome 1"/>
</dbReference>
<dbReference type="GO" id="GO:0016597">
    <property type="term" value="F:amino acid binding"/>
    <property type="evidence" value="ECO:0007669"/>
    <property type="project" value="InterPro"/>
</dbReference>
<dbReference type="GO" id="GO:0004070">
    <property type="term" value="F:aspartate carbamoyltransferase activity"/>
    <property type="evidence" value="ECO:0007669"/>
    <property type="project" value="UniProtKB-UniRule"/>
</dbReference>
<dbReference type="GO" id="GO:0006207">
    <property type="term" value="P:'de novo' pyrimidine nucleobase biosynthetic process"/>
    <property type="evidence" value="ECO:0007669"/>
    <property type="project" value="InterPro"/>
</dbReference>
<dbReference type="GO" id="GO:0044205">
    <property type="term" value="P:'de novo' UMP biosynthetic process"/>
    <property type="evidence" value="ECO:0007669"/>
    <property type="project" value="UniProtKB-UniRule"/>
</dbReference>
<dbReference type="GO" id="GO:0006520">
    <property type="term" value="P:amino acid metabolic process"/>
    <property type="evidence" value="ECO:0007669"/>
    <property type="project" value="InterPro"/>
</dbReference>
<dbReference type="FunFam" id="3.40.50.1370:FF:000001">
    <property type="entry name" value="Aspartate carbamoyltransferase"/>
    <property type="match status" value="1"/>
</dbReference>
<dbReference type="FunFam" id="3.40.50.1370:FF:000002">
    <property type="entry name" value="Aspartate carbamoyltransferase 2"/>
    <property type="match status" value="1"/>
</dbReference>
<dbReference type="Gene3D" id="3.40.50.1370">
    <property type="entry name" value="Aspartate/ornithine carbamoyltransferase"/>
    <property type="match status" value="2"/>
</dbReference>
<dbReference type="HAMAP" id="MF_00001">
    <property type="entry name" value="Asp_carb_tr"/>
    <property type="match status" value="1"/>
</dbReference>
<dbReference type="InterPro" id="IPR006132">
    <property type="entry name" value="Asp/Orn_carbamoyltranf_P-bd"/>
</dbReference>
<dbReference type="InterPro" id="IPR006130">
    <property type="entry name" value="Asp/Orn_carbamoylTrfase"/>
</dbReference>
<dbReference type="InterPro" id="IPR036901">
    <property type="entry name" value="Asp/Orn_carbamoylTrfase_sf"/>
</dbReference>
<dbReference type="InterPro" id="IPR002082">
    <property type="entry name" value="Asp_carbamoyltransf"/>
</dbReference>
<dbReference type="InterPro" id="IPR006131">
    <property type="entry name" value="Asp_carbamoyltransf_Asp/Orn-bd"/>
</dbReference>
<dbReference type="NCBIfam" id="TIGR00670">
    <property type="entry name" value="asp_carb_tr"/>
    <property type="match status" value="1"/>
</dbReference>
<dbReference type="NCBIfam" id="NF002032">
    <property type="entry name" value="PRK00856.1"/>
    <property type="match status" value="1"/>
</dbReference>
<dbReference type="PANTHER" id="PTHR45753:SF6">
    <property type="entry name" value="ASPARTATE CARBAMOYLTRANSFERASE"/>
    <property type="match status" value="1"/>
</dbReference>
<dbReference type="PANTHER" id="PTHR45753">
    <property type="entry name" value="ORNITHINE CARBAMOYLTRANSFERASE, MITOCHONDRIAL"/>
    <property type="match status" value="1"/>
</dbReference>
<dbReference type="Pfam" id="PF00185">
    <property type="entry name" value="OTCace"/>
    <property type="match status" value="1"/>
</dbReference>
<dbReference type="Pfam" id="PF02729">
    <property type="entry name" value="OTCace_N"/>
    <property type="match status" value="1"/>
</dbReference>
<dbReference type="PRINTS" id="PR00100">
    <property type="entry name" value="AOTCASE"/>
</dbReference>
<dbReference type="PRINTS" id="PR00101">
    <property type="entry name" value="ATCASE"/>
</dbReference>
<dbReference type="SUPFAM" id="SSF53671">
    <property type="entry name" value="Aspartate/ornithine carbamoyltransferase"/>
    <property type="match status" value="1"/>
</dbReference>
<dbReference type="PROSITE" id="PS00097">
    <property type="entry name" value="CARBAMOYLTRANSFERASE"/>
    <property type="match status" value="1"/>
</dbReference>
<proteinExistence type="inferred from homology"/>
<gene>
    <name evidence="1" type="primary">pyrB</name>
    <name type="ordered locus">Hlac_1285</name>
</gene>
<name>PYRB_HALLT</name>
<reference key="1">
    <citation type="journal article" date="2016" name="Stand. Genomic Sci.">
        <title>Complete genome sequence of the Antarctic Halorubrum lacusprofundi type strain ACAM 34.</title>
        <authorList>
            <person name="Anderson I.J."/>
            <person name="DasSarma P."/>
            <person name="Lucas S."/>
            <person name="Copeland A."/>
            <person name="Lapidus A."/>
            <person name="Del Rio T.G."/>
            <person name="Tice H."/>
            <person name="Dalin E."/>
            <person name="Bruce D.C."/>
            <person name="Goodwin L."/>
            <person name="Pitluck S."/>
            <person name="Sims D."/>
            <person name="Brettin T.S."/>
            <person name="Detter J.C."/>
            <person name="Han C.S."/>
            <person name="Larimer F."/>
            <person name="Hauser L."/>
            <person name="Land M."/>
            <person name="Ivanova N."/>
            <person name="Richardson P."/>
            <person name="Cavicchioli R."/>
            <person name="DasSarma S."/>
            <person name="Woese C.R."/>
            <person name="Kyrpides N.C."/>
        </authorList>
    </citation>
    <scope>NUCLEOTIDE SEQUENCE [LARGE SCALE GENOMIC DNA]</scope>
    <source>
        <strain>ATCC 49239 / DSM 5036 / JCM 8891 / ACAM 34</strain>
    </source>
</reference>
<organism>
    <name type="scientific">Halorubrum lacusprofundi (strain ATCC 49239 / DSM 5036 / JCM 8891 / ACAM 34)</name>
    <dbReference type="NCBI Taxonomy" id="416348"/>
    <lineage>
        <taxon>Archaea</taxon>
        <taxon>Methanobacteriati</taxon>
        <taxon>Methanobacteriota</taxon>
        <taxon>Stenosarchaea group</taxon>
        <taxon>Halobacteria</taxon>
        <taxon>Halobacteriales</taxon>
        <taxon>Haloferacaceae</taxon>
        <taxon>Halorubrum</taxon>
    </lineage>
</organism>
<evidence type="ECO:0000255" key="1">
    <source>
        <dbReference type="HAMAP-Rule" id="MF_00001"/>
    </source>
</evidence>
<feature type="chain" id="PRO_1000116144" description="Aspartate carbamoyltransferase catalytic subunit">
    <location>
        <begin position="1"/>
        <end position="313"/>
    </location>
</feature>
<feature type="binding site" evidence="1">
    <location>
        <position position="53"/>
    </location>
    <ligand>
        <name>carbamoyl phosphate</name>
        <dbReference type="ChEBI" id="CHEBI:58228"/>
    </ligand>
</feature>
<feature type="binding site" evidence="1">
    <location>
        <position position="54"/>
    </location>
    <ligand>
        <name>carbamoyl phosphate</name>
        <dbReference type="ChEBI" id="CHEBI:58228"/>
    </ligand>
</feature>
<feature type="binding site" evidence="1">
    <location>
        <position position="82"/>
    </location>
    <ligand>
        <name>L-aspartate</name>
        <dbReference type="ChEBI" id="CHEBI:29991"/>
    </ligand>
</feature>
<feature type="binding site" evidence="1">
    <location>
        <position position="103"/>
    </location>
    <ligand>
        <name>carbamoyl phosphate</name>
        <dbReference type="ChEBI" id="CHEBI:58228"/>
    </ligand>
</feature>
<feature type="binding site" evidence="1">
    <location>
        <position position="131"/>
    </location>
    <ligand>
        <name>carbamoyl phosphate</name>
        <dbReference type="ChEBI" id="CHEBI:58228"/>
    </ligand>
</feature>
<feature type="binding site" evidence="1">
    <location>
        <position position="134"/>
    </location>
    <ligand>
        <name>carbamoyl phosphate</name>
        <dbReference type="ChEBI" id="CHEBI:58228"/>
    </ligand>
</feature>
<feature type="binding site" evidence="1">
    <location>
        <position position="163"/>
    </location>
    <ligand>
        <name>L-aspartate</name>
        <dbReference type="ChEBI" id="CHEBI:29991"/>
    </ligand>
</feature>
<feature type="binding site" evidence="1">
    <location>
        <position position="224"/>
    </location>
    <ligand>
        <name>L-aspartate</name>
        <dbReference type="ChEBI" id="CHEBI:29991"/>
    </ligand>
</feature>
<feature type="binding site" evidence="1">
    <location>
        <position position="263"/>
    </location>
    <ligand>
        <name>carbamoyl phosphate</name>
        <dbReference type="ChEBI" id="CHEBI:58228"/>
    </ligand>
</feature>
<feature type="binding site" evidence="1">
    <location>
        <position position="264"/>
    </location>
    <ligand>
        <name>carbamoyl phosphate</name>
        <dbReference type="ChEBI" id="CHEBI:58228"/>
    </ligand>
</feature>
<comment type="function">
    <text evidence="1">Catalyzes the condensation of carbamoyl phosphate and aspartate to form carbamoyl aspartate and inorganic phosphate, the committed step in the de novo pyrimidine nucleotide biosynthesis pathway.</text>
</comment>
<comment type="catalytic activity">
    <reaction evidence="1">
        <text>carbamoyl phosphate + L-aspartate = N-carbamoyl-L-aspartate + phosphate + H(+)</text>
        <dbReference type="Rhea" id="RHEA:20013"/>
        <dbReference type="ChEBI" id="CHEBI:15378"/>
        <dbReference type="ChEBI" id="CHEBI:29991"/>
        <dbReference type="ChEBI" id="CHEBI:32814"/>
        <dbReference type="ChEBI" id="CHEBI:43474"/>
        <dbReference type="ChEBI" id="CHEBI:58228"/>
        <dbReference type="EC" id="2.1.3.2"/>
    </reaction>
</comment>
<comment type="pathway">
    <text evidence="1">Pyrimidine metabolism; UMP biosynthesis via de novo pathway; (S)-dihydroorotate from bicarbonate: step 2/3.</text>
</comment>
<comment type="subunit">
    <text evidence="1">Heterooligomer of catalytic and regulatory chains.</text>
</comment>
<comment type="similarity">
    <text evidence="1">Belongs to the aspartate/ornithine carbamoyltransferase superfamily. ATCase family.</text>
</comment>